<feature type="chain" id="PRO_1000200324" description="Photosystem I assembly protein Ycf3">
    <location>
        <begin position="1"/>
        <end position="173"/>
    </location>
</feature>
<feature type="repeat" description="TPR 1">
    <location>
        <begin position="35"/>
        <end position="68"/>
    </location>
</feature>
<feature type="repeat" description="TPR 2">
    <location>
        <begin position="72"/>
        <end position="105"/>
    </location>
</feature>
<feature type="repeat" description="TPR 3">
    <location>
        <begin position="120"/>
        <end position="153"/>
    </location>
</feature>
<name>YCF3_NOSP7</name>
<keyword id="KW-0472">Membrane</keyword>
<keyword id="KW-0602">Photosynthesis</keyword>
<keyword id="KW-1185">Reference proteome</keyword>
<keyword id="KW-0677">Repeat</keyword>
<keyword id="KW-0793">Thylakoid</keyword>
<keyword id="KW-0802">TPR repeat</keyword>
<comment type="function">
    <text evidence="1">Essential for the assembly of the photosystem I (PSI) complex. May act as a chaperone-like factor to guide the assembly of the PSI subunits.</text>
</comment>
<comment type="subcellular location">
    <subcellularLocation>
        <location evidence="1">Cellular thylakoid membrane</location>
        <topology evidence="1">Peripheral membrane protein</topology>
    </subcellularLocation>
</comment>
<comment type="similarity">
    <text evidence="1">Belongs to the Ycf3 family.</text>
</comment>
<sequence length="173" mass="19906">MPRTQKNDNFVDKSFTVMADIILKILPTNKKAKEAFVYYRDGMSAQAEGEYAEALEYYEEALTLEEDTNDRGYILYNMGLIYASNGDHNKALELYHQAIELNPRLPQALNNIAVIYHYQGEKEKEAGDNEAGEALFDQAADYWIRAIRMAPNNYIEAQNWLKTTGRSQIDVFF</sequence>
<evidence type="ECO:0000255" key="1">
    <source>
        <dbReference type="HAMAP-Rule" id="MF_00439"/>
    </source>
</evidence>
<protein>
    <recommendedName>
        <fullName evidence="1">Photosystem I assembly protein Ycf3</fullName>
    </recommendedName>
</protein>
<proteinExistence type="inferred from homology"/>
<organism>
    <name type="scientific">Nostoc punctiforme (strain ATCC 29133 / PCC 73102)</name>
    <dbReference type="NCBI Taxonomy" id="63737"/>
    <lineage>
        <taxon>Bacteria</taxon>
        <taxon>Bacillati</taxon>
        <taxon>Cyanobacteriota</taxon>
        <taxon>Cyanophyceae</taxon>
        <taxon>Nostocales</taxon>
        <taxon>Nostocaceae</taxon>
        <taxon>Nostoc</taxon>
    </lineage>
</organism>
<gene>
    <name evidence="1" type="primary">ycf3</name>
    <name type="ordered locus">Npun_R3525</name>
</gene>
<reference key="1">
    <citation type="journal article" date="2013" name="Plant Physiol.">
        <title>A Nostoc punctiforme Sugar Transporter Necessary to Establish a Cyanobacterium-Plant Symbiosis.</title>
        <authorList>
            <person name="Ekman M."/>
            <person name="Picossi S."/>
            <person name="Campbell E.L."/>
            <person name="Meeks J.C."/>
            <person name="Flores E."/>
        </authorList>
    </citation>
    <scope>NUCLEOTIDE SEQUENCE [LARGE SCALE GENOMIC DNA]</scope>
    <source>
        <strain>ATCC 29133 / PCC 73102</strain>
    </source>
</reference>
<accession>B2J1S7</accession>
<dbReference type="EMBL" id="CP001037">
    <property type="protein sequence ID" value="ACC81929.1"/>
    <property type="molecule type" value="Genomic_DNA"/>
</dbReference>
<dbReference type="RefSeq" id="WP_012409902.1">
    <property type="nucleotide sequence ID" value="NC_010628.1"/>
</dbReference>
<dbReference type="SMR" id="B2J1S7"/>
<dbReference type="STRING" id="63737.Npun_R3525"/>
<dbReference type="EnsemblBacteria" id="ACC81929">
    <property type="protein sequence ID" value="ACC81929"/>
    <property type="gene ID" value="Npun_R3525"/>
</dbReference>
<dbReference type="KEGG" id="npu:Npun_R3525"/>
<dbReference type="eggNOG" id="COG0457">
    <property type="taxonomic scope" value="Bacteria"/>
</dbReference>
<dbReference type="HOGENOM" id="CLU_141248_0_0_3"/>
<dbReference type="OrthoDB" id="9429505at2"/>
<dbReference type="PhylomeDB" id="B2J1S7"/>
<dbReference type="Proteomes" id="UP000001191">
    <property type="component" value="Chromosome"/>
</dbReference>
<dbReference type="GO" id="GO:0031676">
    <property type="term" value="C:plasma membrane-derived thylakoid membrane"/>
    <property type="evidence" value="ECO:0007669"/>
    <property type="project" value="UniProtKB-SubCell"/>
</dbReference>
<dbReference type="GO" id="GO:0015979">
    <property type="term" value="P:photosynthesis"/>
    <property type="evidence" value="ECO:0007669"/>
    <property type="project" value="UniProtKB-UniRule"/>
</dbReference>
<dbReference type="Gene3D" id="1.25.40.10">
    <property type="entry name" value="Tetratricopeptide repeat domain"/>
    <property type="match status" value="1"/>
</dbReference>
<dbReference type="HAMAP" id="MF_00439">
    <property type="entry name" value="Ycf3"/>
    <property type="match status" value="1"/>
</dbReference>
<dbReference type="InterPro" id="IPR022818">
    <property type="entry name" value="PSI_Ycf3_assembly"/>
</dbReference>
<dbReference type="InterPro" id="IPR011990">
    <property type="entry name" value="TPR-like_helical_dom_sf"/>
</dbReference>
<dbReference type="InterPro" id="IPR019734">
    <property type="entry name" value="TPR_rpt"/>
</dbReference>
<dbReference type="InterPro" id="IPR051685">
    <property type="entry name" value="Ycf3/AcsC/BcsC/TPR_MFPF"/>
</dbReference>
<dbReference type="NCBIfam" id="NF002725">
    <property type="entry name" value="PRK02603.1"/>
    <property type="match status" value="1"/>
</dbReference>
<dbReference type="PANTHER" id="PTHR44943">
    <property type="entry name" value="CELLULOSE SYNTHASE OPERON PROTEIN C"/>
    <property type="match status" value="1"/>
</dbReference>
<dbReference type="PANTHER" id="PTHR44943:SF8">
    <property type="entry name" value="TPR REPEAT-CONTAINING PROTEIN MJ0263"/>
    <property type="match status" value="1"/>
</dbReference>
<dbReference type="Pfam" id="PF00515">
    <property type="entry name" value="TPR_1"/>
    <property type="match status" value="2"/>
</dbReference>
<dbReference type="SMART" id="SM00028">
    <property type="entry name" value="TPR"/>
    <property type="match status" value="3"/>
</dbReference>
<dbReference type="SUPFAM" id="SSF48452">
    <property type="entry name" value="TPR-like"/>
    <property type="match status" value="1"/>
</dbReference>
<dbReference type="PROSITE" id="PS50005">
    <property type="entry name" value="TPR"/>
    <property type="match status" value="3"/>
</dbReference>
<dbReference type="PROSITE" id="PS50293">
    <property type="entry name" value="TPR_REGION"/>
    <property type="match status" value="1"/>
</dbReference>